<sequence length="301" mass="34784">MFGWHWLLEWQTPYEFHGHLIEKVFAEEKTPYQHVTLVEFTRFGKGLIIDGKVQSTLYDEHIYHELLVHPLLLSLPKPPKNVLILGGGEGATLREVLKYKSVEKAVMVDIDEKVIEFAKKYLYEWHQGAFEDKRTSLIITDGLKFINETKDKYDAIILDLTDPIKDSTSYMLYTKEFYEKLRGILNQGGGIVTQATSPSFSLEVYVTIYNTIKEVFKEASASYTYMASFDGLWGFVYGGVRPDLLSEDEVNSRIRERISGQLRFYDDYSHKISFSLPKNIKSEFKKITKVSTEKDPIYVPA</sequence>
<keyword id="KW-0963">Cytoplasm</keyword>
<keyword id="KW-0620">Polyamine biosynthesis</keyword>
<keyword id="KW-0745">Spermidine biosynthesis</keyword>
<keyword id="KW-0808">Transferase</keyword>
<comment type="function">
    <text evidence="1">Catalyzes the irreversible transfer of a propylamine group from the amino donor S-adenosylmethioninamine (decarboxy-AdoMet) to putrescine (1,4-diaminobutane) to yield spermidine.</text>
</comment>
<comment type="catalytic activity">
    <reaction evidence="1">
        <text>S-adenosyl 3-(methylsulfanyl)propylamine + putrescine = S-methyl-5'-thioadenosine + spermidine + H(+)</text>
        <dbReference type="Rhea" id="RHEA:12721"/>
        <dbReference type="ChEBI" id="CHEBI:15378"/>
        <dbReference type="ChEBI" id="CHEBI:17509"/>
        <dbReference type="ChEBI" id="CHEBI:57443"/>
        <dbReference type="ChEBI" id="CHEBI:57834"/>
        <dbReference type="ChEBI" id="CHEBI:326268"/>
        <dbReference type="EC" id="2.5.1.16"/>
    </reaction>
</comment>
<comment type="pathway">
    <text evidence="1">Amine and polyamine biosynthesis; spermidine biosynthesis; spermidine from putrescine: step 1/1.</text>
</comment>
<comment type="subunit">
    <text evidence="1">Homodimer or homotetramer.</text>
</comment>
<comment type="subcellular location">
    <subcellularLocation>
        <location evidence="1">Cytoplasm</location>
    </subcellularLocation>
</comment>
<comment type="similarity">
    <text evidence="1">Belongs to the spermidine/spermine synthase family.</text>
</comment>
<evidence type="ECO:0000255" key="1">
    <source>
        <dbReference type="HAMAP-Rule" id="MF_00198"/>
    </source>
</evidence>
<protein>
    <recommendedName>
        <fullName evidence="1">Polyamine aminopropyltransferase</fullName>
    </recommendedName>
    <alternativeName>
        <fullName evidence="1">Putrescine aminopropyltransferase</fullName>
        <shortName evidence="1">PAPT</shortName>
    </alternativeName>
    <alternativeName>
        <fullName evidence="1">Spermidine synthase</fullName>
        <shortName evidence="1">SPDS</shortName>
        <shortName evidence="1">SPDSY</shortName>
        <ecNumber evidence="1">2.5.1.16</ecNumber>
    </alternativeName>
</protein>
<reference key="1">
    <citation type="journal article" date="2009" name="Proc. Natl. Acad. Sci. U.S.A.">
        <title>Biogeography of the Sulfolobus islandicus pan-genome.</title>
        <authorList>
            <person name="Reno M.L."/>
            <person name="Held N.L."/>
            <person name="Fields C.J."/>
            <person name="Burke P.V."/>
            <person name="Whitaker R.J."/>
        </authorList>
    </citation>
    <scope>NUCLEOTIDE SEQUENCE [LARGE SCALE GENOMIC DNA]</scope>
    <source>
        <strain>Y.N.15.51 / Yellowstone #2</strain>
    </source>
</reference>
<organism>
    <name type="scientific">Saccharolobus islandicus (strain Y.N.15.51 / Yellowstone #2)</name>
    <name type="common">Sulfolobus islandicus</name>
    <dbReference type="NCBI Taxonomy" id="419942"/>
    <lineage>
        <taxon>Archaea</taxon>
        <taxon>Thermoproteota</taxon>
        <taxon>Thermoprotei</taxon>
        <taxon>Sulfolobales</taxon>
        <taxon>Sulfolobaceae</taxon>
        <taxon>Saccharolobus</taxon>
    </lineage>
</organism>
<dbReference type="EC" id="2.5.1.16" evidence="1"/>
<dbReference type="EMBL" id="CP001404">
    <property type="protein sequence ID" value="ACP48551.1"/>
    <property type="molecule type" value="Genomic_DNA"/>
</dbReference>
<dbReference type="RefSeq" id="WP_012717450.1">
    <property type="nucleotide sequence ID" value="NC_012623.1"/>
</dbReference>
<dbReference type="SMR" id="C3NHE1"/>
<dbReference type="GeneID" id="7811838"/>
<dbReference type="KEGG" id="sin:YN1551_1461"/>
<dbReference type="HOGENOM" id="CLU_048199_0_1_2"/>
<dbReference type="UniPathway" id="UPA00248">
    <property type="reaction ID" value="UER00314"/>
</dbReference>
<dbReference type="Proteomes" id="UP000006818">
    <property type="component" value="Chromosome"/>
</dbReference>
<dbReference type="GO" id="GO:0005737">
    <property type="term" value="C:cytoplasm"/>
    <property type="evidence" value="ECO:0007669"/>
    <property type="project" value="UniProtKB-SubCell"/>
</dbReference>
<dbReference type="GO" id="GO:0004766">
    <property type="term" value="F:spermidine synthase activity"/>
    <property type="evidence" value="ECO:0007669"/>
    <property type="project" value="UniProtKB-UniRule"/>
</dbReference>
<dbReference type="GO" id="GO:0010487">
    <property type="term" value="F:thermospermine synthase activity"/>
    <property type="evidence" value="ECO:0007669"/>
    <property type="project" value="UniProtKB-ARBA"/>
</dbReference>
<dbReference type="GO" id="GO:0008295">
    <property type="term" value="P:spermidine biosynthetic process"/>
    <property type="evidence" value="ECO:0007669"/>
    <property type="project" value="UniProtKB-UniRule"/>
</dbReference>
<dbReference type="CDD" id="cd02440">
    <property type="entry name" value="AdoMet_MTases"/>
    <property type="match status" value="1"/>
</dbReference>
<dbReference type="FunFam" id="2.30.140.10:FF:000017">
    <property type="entry name" value="Polyamine aminopropyltransferase"/>
    <property type="match status" value="1"/>
</dbReference>
<dbReference type="FunFam" id="3.40.50.150:FF:000088">
    <property type="entry name" value="Polyamine aminopropyltransferase"/>
    <property type="match status" value="1"/>
</dbReference>
<dbReference type="Gene3D" id="2.30.140.10">
    <property type="entry name" value="Spermidine synthase, tetramerisation domain"/>
    <property type="match status" value="1"/>
</dbReference>
<dbReference type="Gene3D" id="3.40.50.150">
    <property type="entry name" value="Vaccinia Virus protein VP39"/>
    <property type="match status" value="1"/>
</dbReference>
<dbReference type="HAMAP" id="MF_00198">
    <property type="entry name" value="Spermidine_synth"/>
    <property type="match status" value="1"/>
</dbReference>
<dbReference type="InterPro" id="IPR030374">
    <property type="entry name" value="PABS"/>
</dbReference>
<dbReference type="InterPro" id="IPR030373">
    <property type="entry name" value="PABS_CS"/>
</dbReference>
<dbReference type="InterPro" id="IPR029063">
    <property type="entry name" value="SAM-dependent_MTases_sf"/>
</dbReference>
<dbReference type="InterPro" id="IPR001045">
    <property type="entry name" value="Spermi_synthase"/>
</dbReference>
<dbReference type="InterPro" id="IPR035246">
    <property type="entry name" value="Spermidine_synt_N"/>
</dbReference>
<dbReference type="InterPro" id="IPR037163">
    <property type="entry name" value="Spermidine_synt_N_sf"/>
</dbReference>
<dbReference type="PANTHER" id="PTHR43317">
    <property type="entry name" value="THERMOSPERMINE SYNTHASE ACAULIS5"/>
    <property type="match status" value="1"/>
</dbReference>
<dbReference type="PANTHER" id="PTHR43317:SF1">
    <property type="entry name" value="THERMOSPERMINE SYNTHASE ACAULIS5"/>
    <property type="match status" value="1"/>
</dbReference>
<dbReference type="Pfam" id="PF17284">
    <property type="entry name" value="Spermine_synt_N"/>
    <property type="match status" value="1"/>
</dbReference>
<dbReference type="Pfam" id="PF01564">
    <property type="entry name" value="Spermine_synth"/>
    <property type="match status" value="1"/>
</dbReference>
<dbReference type="SUPFAM" id="SSF53335">
    <property type="entry name" value="S-adenosyl-L-methionine-dependent methyltransferases"/>
    <property type="match status" value="1"/>
</dbReference>
<dbReference type="PROSITE" id="PS01330">
    <property type="entry name" value="PABS_1"/>
    <property type="match status" value="1"/>
</dbReference>
<dbReference type="PROSITE" id="PS51006">
    <property type="entry name" value="PABS_2"/>
    <property type="match status" value="1"/>
</dbReference>
<feature type="chain" id="PRO_1000204081" description="Polyamine aminopropyltransferase">
    <location>
        <begin position="1"/>
        <end position="301"/>
    </location>
</feature>
<feature type="domain" description="PABS" evidence="1">
    <location>
        <begin position="4"/>
        <end position="240"/>
    </location>
</feature>
<feature type="active site" description="Proton acceptor" evidence="1">
    <location>
        <position position="159"/>
    </location>
</feature>
<feature type="binding site" evidence="1">
    <location>
        <position position="33"/>
    </location>
    <ligand>
        <name>S-methyl-5'-thioadenosine</name>
        <dbReference type="ChEBI" id="CHEBI:17509"/>
    </ligand>
</feature>
<feature type="binding site" evidence="1">
    <location>
        <position position="64"/>
    </location>
    <ligand>
        <name>spermidine</name>
        <dbReference type="ChEBI" id="CHEBI:57834"/>
    </ligand>
</feature>
<feature type="binding site" evidence="1">
    <location>
        <position position="89"/>
    </location>
    <ligand>
        <name>spermidine</name>
        <dbReference type="ChEBI" id="CHEBI:57834"/>
    </ligand>
</feature>
<feature type="binding site" evidence="1">
    <location>
        <position position="109"/>
    </location>
    <ligand>
        <name>S-methyl-5'-thioadenosine</name>
        <dbReference type="ChEBI" id="CHEBI:17509"/>
    </ligand>
</feature>
<feature type="binding site" evidence="1">
    <location>
        <begin position="141"/>
        <end position="142"/>
    </location>
    <ligand>
        <name>S-methyl-5'-thioadenosine</name>
        <dbReference type="ChEBI" id="CHEBI:17509"/>
    </ligand>
</feature>
<name>SPEE_SACI1</name>
<accession>C3NHE1</accession>
<proteinExistence type="inferred from homology"/>
<gene>
    <name evidence="1" type="primary">speE</name>
    <name type="ordered locus">YN1551_1461</name>
</gene>